<organism>
    <name type="scientific">Aspergillus fumigatus (strain ATCC MYA-4609 / CBS 101355 / FGSC A1100 / Af293)</name>
    <name type="common">Neosartorya fumigata</name>
    <dbReference type="NCBI Taxonomy" id="330879"/>
    <lineage>
        <taxon>Eukaryota</taxon>
        <taxon>Fungi</taxon>
        <taxon>Dikarya</taxon>
        <taxon>Ascomycota</taxon>
        <taxon>Pezizomycotina</taxon>
        <taxon>Eurotiomycetes</taxon>
        <taxon>Eurotiomycetidae</taxon>
        <taxon>Eurotiales</taxon>
        <taxon>Aspergillaceae</taxon>
        <taxon>Aspergillus</taxon>
        <taxon>Aspergillus subgen. Fumigati</taxon>
    </lineage>
</organism>
<comment type="function">
    <text evidence="1">Involved in pre-mRNA splicing.</text>
</comment>
<comment type="subunit">
    <text evidence="1">Associated with the spliceosome.</text>
</comment>
<comment type="subcellular location">
    <subcellularLocation>
        <location evidence="1">Nucleus</location>
    </subcellularLocation>
</comment>
<comment type="similarity">
    <text evidence="5">Belongs to the CWC24 family.</text>
</comment>
<name>CWC24_ASPFU</name>
<feature type="chain" id="PRO_0000055884" description="Pre-mRNA-splicing factor cwc24">
    <location>
        <begin position="1"/>
        <end position="339"/>
    </location>
</feature>
<feature type="zinc finger region" description="C3H1-type" evidence="3">
    <location>
        <begin position="170"/>
        <end position="198"/>
    </location>
</feature>
<feature type="zinc finger region" description="RING-type" evidence="2">
    <location>
        <begin position="253"/>
        <end position="291"/>
    </location>
</feature>
<feature type="region of interest" description="Disordered" evidence="4">
    <location>
        <begin position="1"/>
        <end position="102"/>
    </location>
</feature>
<feature type="region of interest" description="Disordered" evidence="4">
    <location>
        <begin position="114"/>
        <end position="133"/>
    </location>
</feature>
<feature type="region of interest" description="Disordered" evidence="4">
    <location>
        <begin position="221"/>
        <end position="243"/>
    </location>
</feature>
<feature type="region of interest" description="Disordered" evidence="4">
    <location>
        <begin position="319"/>
        <end position="339"/>
    </location>
</feature>
<feature type="compositionally biased region" description="Basic residues" evidence="4">
    <location>
        <begin position="16"/>
        <end position="28"/>
    </location>
</feature>
<feature type="compositionally biased region" description="Acidic residues" evidence="4">
    <location>
        <begin position="40"/>
        <end position="50"/>
    </location>
</feature>
<feature type="compositionally biased region" description="Acidic residues" evidence="4">
    <location>
        <begin position="325"/>
        <end position="339"/>
    </location>
</feature>
<gene>
    <name type="primary">cwc24</name>
    <name type="ORF">AFUA_5G07720</name>
</gene>
<accession>Q4WUA0</accession>
<evidence type="ECO:0000250" key="1"/>
<evidence type="ECO:0000255" key="2">
    <source>
        <dbReference type="PROSITE-ProRule" id="PRU00175"/>
    </source>
</evidence>
<evidence type="ECO:0000255" key="3">
    <source>
        <dbReference type="PROSITE-ProRule" id="PRU00723"/>
    </source>
</evidence>
<evidence type="ECO:0000256" key="4">
    <source>
        <dbReference type="SAM" id="MobiDB-lite"/>
    </source>
</evidence>
<evidence type="ECO:0000305" key="5"/>
<protein>
    <recommendedName>
        <fullName>Pre-mRNA-splicing factor cwc24</fullName>
    </recommendedName>
</protein>
<keyword id="KW-0238">DNA-binding</keyword>
<keyword id="KW-0479">Metal-binding</keyword>
<keyword id="KW-0507">mRNA processing</keyword>
<keyword id="KW-0508">mRNA splicing</keyword>
<keyword id="KW-0539">Nucleus</keyword>
<keyword id="KW-1185">Reference proteome</keyword>
<keyword id="KW-0747">Spliceosome</keyword>
<keyword id="KW-0862">Zinc</keyword>
<keyword id="KW-0863">Zinc-finger</keyword>
<dbReference type="EMBL" id="AAHF01000003">
    <property type="protein sequence ID" value="EAL91826.1"/>
    <property type="molecule type" value="Genomic_DNA"/>
</dbReference>
<dbReference type="RefSeq" id="XP_753864.1">
    <property type="nucleotide sequence ID" value="XM_748771.1"/>
</dbReference>
<dbReference type="SMR" id="Q4WUA0"/>
<dbReference type="FunCoup" id="Q4WUA0">
    <property type="interactions" value="301"/>
</dbReference>
<dbReference type="STRING" id="330879.Q4WUA0"/>
<dbReference type="EnsemblFungi" id="EAL91826">
    <property type="protein sequence ID" value="EAL91826"/>
    <property type="gene ID" value="AFUA_5G07720"/>
</dbReference>
<dbReference type="GeneID" id="3510783"/>
<dbReference type="KEGG" id="afm:AFUA_5G07720"/>
<dbReference type="eggNOG" id="KOG1813">
    <property type="taxonomic scope" value="Eukaryota"/>
</dbReference>
<dbReference type="HOGENOM" id="CLU_050460_0_0_1"/>
<dbReference type="InParanoid" id="Q4WUA0"/>
<dbReference type="OMA" id="ANFRKKP"/>
<dbReference type="OrthoDB" id="25761at2759"/>
<dbReference type="Proteomes" id="UP000002530">
    <property type="component" value="Chromosome 5"/>
</dbReference>
<dbReference type="GO" id="GO:0005684">
    <property type="term" value="C:U2-type spliceosomal complex"/>
    <property type="evidence" value="ECO:0000318"/>
    <property type="project" value="GO_Central"/>
</dbReference>
<dbReference type="GO" id="GO:0003677">
    <property type="term" value="F:DNA binding"/>
    <property type="evidence" value="ECO:0007669"/>
    <property type="project" value="UniProtKB-KW"/>
</dbReference>
<dbReference type="GO" id="GO:0008270">
    <property type="term" value="F:zinc ion binding"/>
    <property type="evidence" value="ECO:0007669"/>
    <property type="project" value="UniProtKB-KW"/>
</dbReference>
<dbReference type="GO" id="GO:0006397">
    <property type="term" value="P:mRNA processing"/>
    <property type="evidence" value="ECO:0007669"/>
    <property type="project" value="UniProtKB-KW"/>
</dbReference>
<dbReference type="GO" id="GO:0034247">
    <property type="term" value="P:snoRNA splicing"/>
    <property type="evidence" value="ECO:0000318"/>
    <property type="project" value="GO_Central"/>
</dbReference>
<dbReference type="CDD" id="cd16539">
    <property type="entry name" value="RING-HC_RNF113A_B"/>
    <property type="match status" value="1"/>
</dbReference>
<dbReference type="FunFam" id="3.30.40.10:FF:000045">
    <property type="entry name" value="RING finger protein 113A"/>
    <property type="match status" value="1"/>
</dbReference>
<dbReference type="Gene3D" id="4.10.1000.10">
    <property type="entry name" value="Zinc finger, CCCH-type"/>
    <property type="match status" value="1"/>
</dbReference>
<dbReference type="Gene3D" id="3.30.40.10">
    <property type="entry name" value="Zinc/RING finger domain, C3HC4 (zinc finger)"/>
    <property type="match status" value="1"/>
</dbReference>
<dbReference type="InterPro" id="IPR039971">
    <property type="entry name" value="CWC24-like"/>
</dbReference>
<dbReference type="InterPro" id="IPR000571">
    <property type="entry name" value="Znf_CCCH"/>
</dbReference>
<dbReference type="InterPro" id="IPR036855">
    <property type="entry name" value="Znf_CCCH_sf"/>
</dbReference>
<dbReference type="InterPro" id="IPR001841">
    <property type="entry name" value="Znf_RING"/>
</dbReference>
<dbReference type="InterPro" id="IPR013083">
    <property type="entry name" value="Znf_RING/FYVE/PHD"/>
</dbReference>
<dbReference type="InterPro" id="IPR017907">
    <property type="entry name" value="Znf_RING_CS"/>
</dbReference>
<dbReference type="PANTHER" id="PTHR12930:SF0">
    <property type="entry name" value="RING FINGER PROTEIN 113B"/>
    <property type="match status" value="1"/>
</dbReference>
<dbReference type="PANTHER" id="PTHR12930">
    <property type="entry name" value="ZINC FINGER PROTEIN 183"/>
    <property type="match status" value="1"/>
</dbReference>
<dbReference type="Pfam" id="PF13923">
    <property type="entry name" value="zf-C3HC4_2"/>
    <property type="match status" value="1"/>
</dbReference>
<dbReference type="Pfam" id="PF00642">
    <property type="entry name" value="zf-CCCH"/>
    <property type="match status" value="1"/>
</dbReference>
<dbReference type="SMART" id="SM00184">
    <property type="entry name" value="RING"/>
    <property type="match status" value="1"/>
</dbReference>
<dbReference type="SMART" id="SM00356">
    <property type="entry name" value="ZnF_C3H1"/>
    <property type="match status" value="1"/>
</dbReference>
<dbReference type="SUPFAM" id="SSF90229">
    <property type="entry name" value="CCCH zinc finger"/>
    <property type="match status" value="1"/>
</dbReference>
<dbReference type="SUPFAM" id="SSF57850">
    <property type="entry name" value="RING/U-box"/>
    <property type="match status" value="1"/>
</dbReference>
<dbReference type="PROSITE" id="PS50103">
    <property type="entry name" value="ZF_C3H1"/>
    <property type="match status" value="1"/>
</dbReference>
<dbReference type="PROSITE" id="PS00518">
    <property type="entry name" value="ZF_RING_1"/>
    <property type="match status" value="1"/>
</dbReference>
<dbReference type="PROSITE" id="PS50089">
    <property type="entry name" value="ZF_RING_2"/>
    <property type="match status" value="1"/>
</dbReference>
<sequence length="339" mass="37355">MAEETQGADAVPQISFKKRTNKAKANFRKKPDTPPPASDSDSDFTSSDDEEGRRIKRRRKNAAVTASSTTAGPRRNVVEDQPATETAAIPLTSSNDATKHSNWYDEELSEKNLLGTTRARPASNTQSAPDGTYKGAANYSSFIQKNPNAPTKQFGPIKAPTNVRTVTVMDFAPDVCKDWKQTGFCGFGDSCKFLHAREDYKQGWELDREWEIGTKGKQLSGRVVSKRSGDAKTAEDDEDDDDEELLESIPFACIICKSSYKSPIVTKCGHYFCESCALQRYRKNPSCAACGAGTGGVFNVAKKLNHLLDKKRERARKLREQAIAEGEEVSSDEEGDEES</sequence>
<reference key="1">
    <citation type="journal article" date="2005" name="Nature">
        <title>Genomic sequence of the pathogenic and allergenic filamentous fungus Aspergillus fumigatus.</title>
        <authorList>
            <person name="Nierman W.C."/>
            <person name="Pain A."/>
            <person name="Anderson M.J."/>
            <person name="Wortman J.R."/>
            <person name="Kim H.S."/>
            <person name="Arroyo J."/>
            <person name="Berriman M."/>
            <person name="Abe K."/>
            <person name="Archer D.B."/>
            <person name="Bermejo C."/>
            <person name="Bennett J.W."/>
            <person name="Bowyer P."/>
            <person name="Chen D."/>
            <person name="Collins M."/>
            <person name="Coulsen R."/>
            <person name="Davies R."/>
            <person name="Dyer P.S."/>
            <person name="Farman M.L."/>
            <person name="Fedorova N."/>
            <person name="Fedorova N.D."/>
            <person name="Feldblyum T.V."/>
            <person name="Fischer R."/>
            <person name="Fosker N."/>
            <person name="Fraser A."/>
            <person name="Garcia J.L."/>
            <person name="Garcia M.J."/>
            <person name="Goble A."/>
            <person name="Goldman G.H."/>
            <person name="Gomi K."/>
            <person name="Griffith-Jones S."/>
            <person name="Gwilliam R."/>
            <person name="Haas B.J."/>
            <person name="Haas H."/>
            <person name="Harris D.E."/>
            <person name="Horiuchi H."/>
            <person name="Huang J."/>
            <person name="Humphray S."/>
            <person name="Jimenez J."/>
            <person name="Keller N."/>
            <person name="Khouri H."/>
            <person name="Kitamoto K."/>
            <person name="Kobayashi T."/>
            <person name="Konzack S."/>
            <person name="Kulkarni R."/>
            <person name="Kumagai T."/>
            <person name="Lafton A."/>
            <person name="Latge J.-P."/>
            <person name="Li W."/>
            <person name="Lord A."/>
            <person name="Lu C."/>
            <person name="Majoros W.H."/>
            <person name="May G.S."/>
            <person name="Miller B.L."/>
            <person name="Mohamoud Y."/>
            <person name="Molina M."/>
            <person name="Monod M."/>
            <person name="Mouyna I."/>
            <person name="Mulligan S."/>
            <person name="Murphy L.D."/>
            <person name="O'Neil S."/>
            <person name="Paulsen I."/>
            <person name="Penalva M.A."/>
            <person name="Pertea M."/>
            <person name="Price C."/>
            <person name="Pritchard B.L."/>
            <person name="Quail M.A."/>
            <person name="Rabbinowitsch E."/>
            <person name="Rawlins N."/>
            <person name="Rajandream M.A."/>
            <person name="Reichard U."/>
            <person name="Renauld H."/>
            <person name="Robson G.D."/>
            <person name="Rodriguez de Cordoba S."/>
            <person name="Rodriguez-Pena J.M."/>
            <person name="Ronning C.M."/>
            <person name="Rutter S."/>
            <person name="Salzberg S.L."/>
            <person name="Sanchez M."/>
            <person name="Sanchez-Ferrero J.C."/>
            <person name="Saunders D."/>
            <person name="Seeger K."/>
            <person name="Squares R."/>
            <person name="Squares S."/>
            <person name="Takeuchi M."/>
            <person name="Tekaia F."/>
            <person name="Turner G."/>
            <person name="Vazquez de Aldana C.R."/>
            <person name="Weidman J."/>
            <person name="White O."/>
            <person name="Woodward J.R."/>
            <person name="Yu J.-H."/>
            <person name="Fraser C.M."/>
            <person name="Galagan J.E."/>
            <person name="Asai K."/>
            <person name="Machida M."/>
            <person name="Hall N."/>
            <person name="Barrell B.G."/>
            <person name="Denning D.W."/>
        </authorList>
    </citation>
    <scope>NUCLEOTIDE SEQUENCE [LARGE SCALE GENOMIC DNA]</scope>
    <source>
        <strain>ATCC MYA-4609 / CBS 101355 / FGSC A1100 / Af293</strain>
    </source>
</reference>
<proteinExistence type="inferred from homology"/>